<organism>
    <name type="scientific">Wolinella succinogenes (strain ATCC 29543 / DSM 1740 / CCUG 13145 / JCM 31913 / LMG 7466 / NCTC 11488 / FDC 602W)</name>
    <name type="common">Vibrio succinogenes</name>
    <dbReference type="NCBI Taxonomy" id="273121"/>
    <lineage>
        <taxon>Bacteria</taxon>
        <taxon>Pseudomonadati</taxon>
        <taxon>Campylobacterota</taxon>
        <taxon>Epsilonproteobacteria</taxon>
        <taxon>Campylobacterales</taxon>
        <taxon>Helicobacteraceae</taxon>
        <taxon>Wolinella</taxon>
    </lineage>
</organism>
<dbReference type="EC" id="3.4.11.1" evidence="1"/>
<dbReference type="EC" id="3.4.11.10" evidence="1"/>
<dbReference type="EMBL" id="BX571660">
    <property type="protein sequence ID" value="CAE10424.1"/>
    <property type="molecule type" value="Genomic_DNA"/>
</dbReference>
<dbReference type="RefSeq" id="WP_011139210.1">
    <property type="nucleotide sequence ID" value="NC_005090.1"/>
</dbReference>
<dbReference type="SMR" id="Q7M8W6"/>
<dbReference type="STRING" id="273121.WS1353"/>
<dbReference type="MEROPS" id="M17.016"/>
<dbReference type="KEGG" id="wsu:WS1353"/>
<dbReference type="eggNOG" id="COG0260">
    <property type="taxonomic scope" value="Bacteria"/>
</dbReference>
<dbReference type="HOGENOM" id="CLU_013734_2_2_7"/>
<dbReference type="Proteomes" id="UP000000422">
    <property type="component" value="Chromosome"/>
</dbReference>
<dbReference type="GO" id="GO:0005737">
    <property type="term" value="C:cytoplasm"/>
    <property type="evidence" value="ECO:0007669"/>
    <property type="project" value="UniProtKB-SubCell"/>
</dbReference>
<dbReference type="GO" id="GO:0030145">
    <property type="term" value="F:manganese ion binding"/>
    <property type="evidence" value="ECO:0007669"/>
    <property type="project" value="UniProtKB-UniRule"/>
</dbReference>
<dbReference type="GO" id="GO:0070006">
    <property type="term" value="F:metalloaminopeptidase activity"/>
    <property type="evidence" value="ECO:0007669"/>
    <property type="project" value="InterPro"/>
</dbReference>
<dbReference type="GO" id="GO:0006508">
    <property type="term" value="P:proteolysis"/>
    <property type="evidence" value="ECO:0007669"/>
    <property type="project" value="UniProtKB-KW"/>
</dbReference>
<dbReference type="CDD" id="cd00433">
    <property type="entry name" value="Peptidase_M17"/>
    <property type="match status" value="1"/>
</dbReference>
<dbReference type="Gene3D" id="3.40.220.10">
    <property type="entry name" value="Leucine Aminopeptidase, subunit E, domain 1"/>
    <property type="match status" value="1"/>
</dbReference>
<dbReference type="Gene3D" id="3.40.630.10">
    <property type="entry name" value="Zn peptidases"/>
    <property type="match status" value="1"/>
</dbReference>
<dbReference type="HAMAP" id="MF_00181">
    <property type="entry name" value="Cytosol_peptidase_M17"/>
    <property type="match status" value="1"/>
</dbReference>
<dbReference type="InterPro" id="IPR011356">
    <property type="entry name" value="Leucine_aapep/pepB"/>
</dbReference>
<dbReference type="InterPro" id="IPR043472">
    <property type="entry name" value="Macro_dom-like"/>
</dbReference>
<dbReference type="InterPro" id="IPR000819">
    <property type="entry name" value="Peptidase_M17_C"/>
</dbReference>
<dbReference type="InterPro" id="IPR023042">
    <property type="entry name" value="Peptidase_M17_leu_NH2_pept"/>
</dbReference>
<dbReference type="InterPro" id="IPR008283">
    <property type="entry name" value="Peptidase_M17_N"/>
</dbReference>
<dbReference type="NCBIfam" id="NF002073">
    <property type="entry name" value="PRK00913.1-2"/>
    <property type="match status" value="1"/>
</dbReference>
<dbReference type="NCBIfam" id="NF002081">
    <property type="entry name" value="PRK00913.3-3"/>
    <property type="match status" value="1"/>
</dbReference>
<dbReference type="PANTHER" id="PTHR11963:SF23">
    <property type="entry name" value="CYTOSOL AMINOPEPTIDASE"/>
    <property type="match status" value="1"/>
</dbReference>
<dbReference type="PANTHER" id="PTHR11963">
    <property type="entry name" value="LEUCINE AMINOPEPTIDASE-RELATED"/>
    <property type="match status" value="1"/>
</dbReference>
<dbReference type="Pfam" id="PF00883">
    <property type="entry name" value="Peptidase_M17"/>
    <property type="match status" value="1"/>
</dbReference>
<dbReference type="Pfam" id="PF02789">
    <property type="entry name" value="Peptidase_M17_N"/>
    <property type="match status" value="1"/>
</dbReference>
<dbReference type="PRINTS" id="PR00481">
    <property type="entry name" value="LAMNOPPTDASE"/>
</dbReference>
<dbReference type="SUPFAM" id="SSF52949">
    <property type="entry name" value="Macro domain-like"/>
    <property type="match status" value="1"/>
</dbReference>
<dbReference type="SUPFAM" id="SSF53187">
    <property type="entry name" value="Zn-dependent exopeptidases"/>
    <property type="match status" value="1"/>
</dbReference>
<dbReference type="PROSITE" id="PS00631">
    <property type="entry name" value="CYTOSOL_AP"/>
    <property type="match status" value="1"/>
</dbReference>
<accession>Q7M8W6</accession>
<gene>
    <name evidence="1" type="primary">pepA</name>
    <name type="ordered locus">WS1353</name>
</gene>
<feature type="chain" id="PRO_0000165815" description="Probable cytosol aminopeptidase">
    <location>
        <begin position="1"/>
        <end position="483"/>
    </location>
</feature>
<feature type="active site" evidence="1">
    <location>
        <position position="257"/>
    </location>
</feature>
<feature type="active site" evidence="1">
    <location>
        <position position="331"/>
    </location>
</feature>
<feature type="binding site" evidence="1">
    <location>
        <position position="245"/>
    </location>
    <ligand>
        <name>Mn(2+)</name>
        <dbReference type="ChEBI" id="CHEBI:29035"/>
        <label>2</label>
    </ligand>
</feature>
<feature type="binding site" evidence="1">
    <location>
        <position position="250"/>
    </location>
    <ligand>
        <name>Mn(2+)</name>
        <dbReference type="ChEBI" id="CHEBI:29035"/>
        <label>1</label>
    </ligand>
</feature>
<feature type="binding site" evidence="1">
    <location>
        <position position="250"/>
    </location>
    <ligand>
        <name>Mn(2+)</name>
        <dbReference type="ChEBI" id="CHEBI:29035"/>
        <label>2</label>
    </ligand>
</feature>
<feature type="binding site" evidence="1">
    <location>
        <position position="268"/>
    </location>
    <ligand>
        <name>Mn(2+)</name>
        <dbReference type="ChEBI" id="CHEBI:29035"/>
        <label>2</label>
    </ligand>
</feature>
<feature type="binding site" evidence="1">
    <location>
        <position position="327"/>
    </location>
    <ligand>
        <name>Mn(2+)</name>
        <dbReference type="ChEBI" id="CHEBI:29035"/>
        <label>1</label>
    </ligand>
</feature>
<feature type="binding site" evidence="1">
    <location>
        <position position="329"/>
    </location>
    <ligand>
        <name>Mn(2+)</name>
        <dbReference type="ChEBI" id="CHEBI:29035"/>
        <label>1</label>
    </ligand>
</feature>
<feature type="binding site" evidence="1">
    <location>
        <position position="329"/>
    </location>
    <ligand>
        <name>Mn(2+)</name>
        <dbReference type="ChEBI" id="CHEBI:29035"/>
        <label>2</label>
    </ligand>
</feature>
<name>AMPA_WOLSU</name>
<protein>
    <recommendedName>
        <fullName evidence="1">Probable cytosol aminopeptidase</fullName>
        <ecNumber evidence="1">3.4.11.1</ecNumber>
    </recommendedName>
    <alternativeName>
        <fullName evidence="1">Leucine aminopeptidase</fullName>
        <shortName evidence="1">LAP</shortName>
        <ecNumber evidence="1">3.4.11.10</ecNumber>
    </alternativeName>
    <alternativeName>
        <fullName evidence="1">Leucyl aminopeptidase</fullName>
    </alternativeName>
</protein>
<proteinExistence type="inferred from homology"/>
<evidence type="ECO:0000255" key="1">
    <source>
        <dbReference type="HAMAP-Rule" id="MF_00181"/>
    </source>
</evidence>
<comment type="function">
    <text evidence="1">Presumably involved in the processing and regular turnover of intracellular proteins. Catalyzes the removal of unsubstituted N-terminal amino acids from various peptides.</text>
</comment>
<comment type="catalytic activity">
    <reaction evidence="1">
        <text>Release of an N-terminal amino acid, Xaa-|-Yaa-, in which Xaa is preferably Leu, but may be other amino acids including Pro although not Arg or Lys, and Yaa may be Pro. Amino acid amides and methyl esters are also readily hydrolyzed, but rates on arylamides are exceedingly low.</text>
        <dbReference type="EC" id="3.4.11.1"/>
    </reaction>
</comment>
<comment type="catalytic activity">
    <reaction evidence="1">
        <text>Release of an N-terminal amino acid, preferentially leucine, but not glutamic or aspartic acids.</text>
        <dbReference type="EC" id="3.4.11.10"/>
    </reaction>
</comment>
<comment type="cofactor">
    <cofactor evidence="1">
        <name>Mn(2+)</name>
        <dbReference type="ChEBI" id="CHEBI:29035"/>
    </cofactor>
    <text evidence="1">Binds 2 manganese ions per subunit.</text>
</comment>
<comment type="subcellular location">
    <subcellularLocation>
        <location evidence="1">Cytoplasm</location>
    </subcellularLocation>
</comment>
<comment type="similarity">
    <text evidence="1">Belongs to the peptidase M17 family.</text>
</comment>
<reference key="1">
    <citation type="journal article" date="2003" name="Proc. Natl. Acad. Sci. U.S.A.">
        <title>Complete genome sequence and analysis of Wolinella succinogenes.</title>
        <authorList>
            <person name="Baar C."/>
            <person name="Eppinger M."/>
            <person name="Raddatz G."/>
            <person name="Simon J."/>
            <person name="Lanz C."/>
            <person name="Klimmek O."/>
            <person name="Nandakumar R."/>
            <person name="Gross R."/>
            <person name="Rosinus A."/>
            <person name="Keller H."/>
            <person name="Jagtap P."/>
            <person name="Linke B."/>
            <person name="Meyer F."/>
            <person name="Lederer H."/>
            <person name="Schuster S.C."/>
        </authorList>
    </citation>
    <scope>NUCLEOTIDE SEQUENCE [LARGE SCALE GENOMIC DNA]</scope>
    <source>
        <strain>ATCC 29543 / DSM 1740 / CCUG 13145 / JCM 31913 / LMG 7466 / NCTC 11488 / FDC 602W</strain>
    </source>
</reference>
<sequence>MEILCHSAPLHEIKAEASLIFVINKEFSHEWIADSELFGSVGFEGKEGQTLFIPQSKTLYYALDSLTPDSIRESSAKALRALKKYPFSSFKVGIYTQESLECLEAMAAGFLLGDYNFETYKSQKSESKLTQILISLQTHLGRQIDSKSFETILARQSAIARAVNLARELVNTPPEDATPQKIAQAAQKVAQEHQLECRIEDEKFLEKEQMGAFLAVSRASIHRPRLIHLTHQSPKPKLKVALVGKGLTYDSGGLSLKPADFMVTMKADKGGGCAVIAILQAAKELGLELELHGIVGATENMIGGNAYKPDDVLRAKNGKTIEIRNTDAEGRLVLADCLVYAQELKPDYIIDLATLTGACVVGLGEYTSGVLGHSQELKHRFIECATQSGELTADLPFNRHLKKLIESKVADVCNVSSTRYGGSITAGLFLSEFIEESYKEKWLHLDIAGPAYVEKEWDVNPHGASGAGVRMVLQFLEQLTKES</sequence>
<keyword id="KW-0031">Aminopeptidase</keyword>
<keyword id="KW-0963">Cytoplasm</keyword>
<keyword id="KW-0378">Hydrolase</keyword>
<keyword id="KW-0464">Manganese</keyword>
<keyword id="KW-0479">Metal-binding</keyword>
<keyword id="KW-0645">Protease</keyword>
<keyword id="KW-1185">Reference proteome</keyword>